<sequence length="418" mass="45897">MKDQIIQKLHDVVRASRELVTLSDEAINRLLLDLADQIPNHQTAILEANQRDIERMDSANPMVDRLLLNEARLQAIAADIRNVASLPTPLDAVLEKRTLPNGLELKKVSVPMGVIGIIYEARPNVTFDVFALCLKSGNATVLKGGSDAMYSNIAIVELIHSVLQQHGINPDTLYLLPAEREAAAVMLGAVGYIDMIIPRGSQKLIDFVRDNSRVPVIETGAGIVHTYFDVSGDLELGKQVIFNAKTRRPSVCNALDTLVIHRDRLGDLSYLVEPLQSRQVELFVDDAAYQELHGFYPKALLHQAKPEHFGTEFLSLKMSVKTVANLDEALEHIATYSSRHSEAIIATDAATVATFMKRVDAAVVYANTSTAFTDGAQFGLGAEIGISTQKLHARGPMALREMTTYKWLIVGNGQVRPA</sequence>
<dbReference type="EC" id="1.2.1.41" evidence="1"/>
<dbReference type="EMBL" id="CP000108">
    <property type="protein sequence ID" value="ABB28364.1"/>
    <property type="molecule type" value="Genomic_DNA"/>
</dbReference>
<dbReference type="SMR" id="Q3ARL1"/>
<dbReference type="STRING" id="340177.Cag_1102"/>
<dbReference type="KEGG" id="cch:Cag_1102"/>
<dbReference type="eggNOG" id="COG0014">
    <property type="taxonomic scope" value="Bacteria"/>
</dbReference>
<dbReference type="HOGENOM" id="CLU_030231_0_0_10"/>
<dbReference type="OrthoDB" id="9809970at2"/>
<dbReference type="UniPathway" id="UPA00098">
    <property type="reaction ID" value="UER00360"/>
</dbReference>
<dbReference type="GO" id="GO:0005737">
    <property type="term" value="C:cytoplasm"/>
    <property type="evidence" value="ECO:0007669"/>
    <property type="project" value="UniProtKB-SubCell"/>
</dbReference>
<dbReference type="GO" id="GO:0004350">
    <property type="term" value="F:glutamate-5-semialdehyde dehydrogenase activity"/>
    <property type="evidence" value="ECO:0007669"/>
    <property type="project" value="UniProtKB-UniRule"/>
</dbReference>
<dbReference type="GO" id="GO:0050661">
    <property type="term" value="F:NADP binding"/>
    <property type="evidence" value="ECO:0007669"/>
    <property type="project" value="InterPro"/>
</dbReference>
<dbReference type="GO" id="GO:0055129">
    <property type="term" value="P:L-proline biosynthetic process"/>
    <property type="evidence" value="ECO:0007669"/>
    <property type="project" value="UniProtKB-UniRule"/>
</dbReference>
<dbReference type="CDD" id="cd07079">
    <property type="entry name" value="ALDH_F18-19_ProA-GPR"/>
    <property type="match status" value="1"/>
</dbReference>
<dbReference type="Gene3D" id="3.40.605.10">
    <property type="entry name" value="Aldehyde Dehydrogenase, Chain A, domain 1"/>
    <property type="match status" value="1"/>
</dbReference>
<dbReference type="Gene3D" id="3.40.309.10">
    <property type="entry name" value="Aldehyde Dehydrogenase, Chain A, domain 2"/>
    <property type="match status" value="1"/>
</dbReference>
<dbReference type="HAMAP" id="MF_00412">
    <property type="entry name" value="ProA"/>
    <property type="match status" value="1"/>
</dbReference>
<dbReference type="InterPro" id="IPR016161">
    <property type="entry name" value="Ald_DH/histidinol_DH"/>
</dbReference>
<dbReference type="InterPro" id="IPR016163">
    <property type="entry name" value="Ald_DH_C"/>
</dbReference>
<dbReference type="InterPro" id="IPR016162">
    <property type="entry name" value="Ald_DH_N"/>
</dbReference>
<dbReference type="InterPro" id="IPR020593">
    <property type="entry name" value="G-glutamylP_reductase_CS"/>
</dbReference>
<dbReference type="InterPro" id="IPR012134">
    <property type="entry name" value="Glu-5-SA_DH"/>
</dbReference>
<dbReference type="InterPro" id="IPR000965">
    <property type="entry name" value="GPR_dom"/>
</dbReference>
<dbReference type="NCBIfam" id="NF001221">
    <property type="entry name" value="PRK00197.1"/>
    <property type="match status" value="1"/>
</dbReference>
<dbReference type="NCBIfam" id="TIGR00407">
    <property type="entry name" value="proA"/>
    <property type="match status" value="1"/>
</dbReference>
<dbReference type="PANTHER" id="PTHR11063:SF8">
    <property type="entry name" value="DELTA-1-PYRROLINE-5-CARBOXYLATE SYNTHASE"/>
    <property type="match status" value="1"/>
</dbReference>
<dbReference type="PANTHER" id="PTHR11063">
    <property type="entry name" value="GLUTAMATE SEMIALDEHYDE DEHYDROGENASE"/>
    <property type="match status" value="1"/>
</dbReference>
<dbReference type="PIRSF" id="PIRSF000151">
    <property type="entry name" value="GPR"/>
    <property type="match status" value="1"/>
</dbReference>
<dbReference type="SUPFAM" id="SSF53720">
    <property type="entry name" value="ALDH-like"/>
    <property type="match status" value="1"/>
</dbReference>
<dbReference type="PROSITE" id="PS01223">
    <property type="entry name" value="PROA"/>
    <property type="match status" value="1"/>
</dbReference>
<reference key="1">
    <citation type="submission" date="2005-08" db="EMBL/GenBank/DDBJ databases">
        <title>Complete sequence of Chlorobium chlorochromatii CaD3.</title>
        <authorList>
            <consortium name="US DOE Joint Genome Institute"/>
            <person name="Copeland A."/>
            <person name="Lucas S."/>
            <person name="Lapidus A."/>
            <person name="Barry K."/>
            <person name="Detter J.C."/>
            <person name="Glavina T."/>
            <person name="Hammon N."/>
            <person name="Israni S."/>
            <person name="Pitluck S."/>
            <person name="Bryant D."/>
            <person name="Schmutz J."/>
            <person name="Larimer F."/>
            <person name="Land M."/>
            <person name="Kyrpides N."/>
            <person name="Ivanova N."/>
            <person name="Richardson P."/>
        </authorList>
    </citation>
    <scope>NUCLEOTIDE SEQUENCE [LARGE SCALE GENOMIC DNA]</scope>
    <source>
        <strain>CaD3</strain>
    </source>
</reference>
<name>PROA_CHLCH</name>
<feature type="chain" id="PRO_0000229997" description="Gamma-glutamyl phosphate reductase">
    <location>
        <begin position="1"/>
        <end position="418"/>
    </location>
</feature>
<proteinExistence type="inferred from homology"/>
<accession>Q3ARL1</accession>
<evidence type="ECO:0000255" key="1">
    <source>
        <dbReference type="HAMAP-Rule" id="MF_00412"/>
    </source>
</evidence>
<comment type="function">
    <text evidence="1">Catalyzes the NADPH-dependent reduction of L-glutamate 5-phosphate into L-glutamate 5-semialdehyde and phosphate. The product spontaneously undergoes cyclization to form 1-pyrroline-5-carboxylate.</text>
</comment>
<comment type="catalytic activity">
    <reaction evidence="1">
        <text>L-glutamate 5-semialdehyde + phosphate + NADP(+) = L-glutamyl 5-phosphate + NADPH + H(+)</text>
        <dbReference type="Rhea" id="RHEA:19541"/>
        <dbReference type="ChEBI" id="CHEBI:15378"/>
        <dbReference type="ChEBI" id="CHEBI:43474"/>
        <dbReference type="ChEBI" id="CHEBI:57783"/>
        <dbReference type="ChEBI" id="CHEBI:58066"/>
        <dbReference type="ChEBI" id="CHEBI:58274"/>
        <dbReference type="ChEBI" id="CHEBI:58349"/>
        <dbReference type="EC" id="1.2.1.41"/>
    </reaction>
</comment>
<comment type="pathway">
    <text evidence="1">Amino-acid biosynthesis; L-proline biosynthesis; L-glutamate 5-semialdehyde from L-glutamate: step 2/2.</text>
</comment>
<comment type="subcellular location">
    <subcellularLocation>
        <location evidence="1">Cytoplasm</location>
    </subcellularLocation>
</comment>
<comment type="similarity">
    <text evidence="1">Belongs to the gamma-glutamyl phosphate reductase family.</text>
</comment>
<protein>
    <recommendedName>
        <fullName evidence="1">Gamma-glutamyl phosphate reductase</fullName>
        <shortName evidence="1">GPR</shortName>
        <ecNumber evidence="1">1.2.1.41</ecNumber>
    </recommendedName>
    <alternativeName>
        <fullName evidence="1">Glutamate-5-semialdehyde dehydrogenase</fullName>
    </alternativeName>
    <alternativeName>
        <fullName evidence="1">Glutamyl-gamma-semialdehyde dehydrogenase</fullName>
        <shortName evidence="1">GSA dehydrogenase</shortName>
    </alternativeName>
</protein>
<gene>
    <name evidence="1" type="primary">proA</name>
    <name type="ordered locus">Cag_1102</name>
</gene>
<organism>
    <name type="scientific">Chlorobium chlorochromatii (strain CaD3)</name>
    <dbReference type="NCBI Taxonomy" id="340177"/>
    <lineage>
        <taxon>Bacteria</taxon>
        <taxon>Pseudomonadati</taxon>
        <taxon>Chlorobiota</taxon>
        <taxon>Chlorobiia</taxon>
        <taxon>Chlorobiales</taxon>
        <taxon>Chlorobiaceae</taxon>
        <taxon>Chlorobium/Pelodictyon group</taxon>
        <taxon>Chlorobium</taxon>
    </lineage>
</organism>
<keyword id="KW-0028">Amino-acid biosynthesis</keyword>
<keyword id="KW-0963">Cytoplasm</keyword>
<keyword id="KW-0521">NADP</keyword>
<keyword id="KW-0560">Oxidoreductase</keyword>
<keyword id="KW-0641">Proline biosynthesis</keyword>